<proteinExistence type="inferred from homology"/>
<sequence>MKVMASVKRICRNCKIIKRKGVVRVICSSDPRHKQRQG</sequence>
<comment type="similarity">
    <text evidence="1">Belongs to the bacterial ribosomal protein bL36 family.</text>
</comment>
<name>RL36_BURA4</name>
<organism>
    <name type="scientific">Burkholderia ambifaria (strain MC40-6)</name>
    <dbReference type="NCBI Taxonomy" id="398577"/>
    <lineage>
        <taxon>Bacteria</taxon>
        <taxon>Pseudomonadati</taxon>
        <taxon>Pseudomonadota</taxon>
        <taxon>Betaproteobacteria</taxon>
        <taxon>Burkholderiales</taxon>
        <taxon>Burkholderiaceae</taxon>
        <taxon>Burkholderia</taxon>
        <taxon>Burkholderia cepacia complex</taxon>
    </lineage>
</organism>
<keyword id="KW-0687">Ribonucleoprotein</keyword>
<keyword id="KW-0689">Ribosomal protein</keyword>
<evidence type="ECO:0000255" key="1">
    <source>
        <dbReference type="HAMAP-Rule" id="MF_00251"/>
    </source>
</evidence>
<evidence type="ECO:0000305" key="2"/>
<protein>
    <recommendedName>
        <fullName evidence="1">Large ribosomal subunit protein bL36</fullName>
    </recommendedName>
    <alternativeName>
        <fullName evidence="2">50S ribosomal protein L36</fullName>
    </alternativeName>
</protein>
<accession>B1YRQ1</accession>
<feature type="chain" id="PRO_1000101007" description="Large ribosomal subunit protein bL36">
    <location>
        <begin position="1"/>
        <end position="38"/>
    </location>
</feature>
<dbReference type="EMBL" id="CP001025">
    <property type="protein sequence ID" value="ACB62799.1"/>
    <property type="molecule type" value="Genomic_DNA"/>
</dbReference>
<dbReference type="RefSeq" id="WP_004199844.1">
    <property type="nucleotide sequence ID" value="NC_010551.1"/>
</dbReference>
<dbReference type="SMR" id="B1YRQ1"/>
<dbReference type="GeneID" id="98107138"/>
<dbReference type="KEGG" id="bac:BamMC406_0298"/>
<dbReference type="HOGENOM" id="CLU_135723_6_2_4"/>
<dbReference type="OrthoDB" id="9802520at2"/>
<dbReference type="Proteomes" id="UP000001680">
    <property type="component" value="Chromosome 1"/>
</dbReference>
<dbReference type="GO" id="GO:0005737">
    <property type="term" value="C:cytoplasm"/>
    <property type="evidence" value="ECO:0007669"/>
    <property type="project" value="UniProtKB-ARBA"/>
</dbReference>
<dbReference type="GO" id="GO:1990904">
    <property type="term" value="C:ribonucleoprotein complex"/>
    <property type="evidence" value="ECO:0007669"/>
    <property type="project" value="UniProtKB-KW"/>
</dbReference>
<dbReference type="GO" id="GO:0005840">
    <property type="term" value="C:ribosome"/>
    <property type="evidence" value="ECO:0007669"/>
    <property type="project" value="UniProtKB-KW"/>
</dbReference>
<dbReference type="GO" id="GO:0003735">
    <property type="term" value="F:structural constituent of ribosome"/>
    <property type="evidence" value="ECO:0007669"/>
    <property type="project" value="InterPro"/>
</dbReference>
<dbReference type="GO" id="GO:0006412">
    <property type="term" value="P:translation"/>
    <property type="evidence" value="ECO:0007669"/>
    <property type="project" value="UniProtKB-UniRule"/>
</dbReference>
<dbReference type="HAMAP" id="MF_00251">
    <property type="entry name" value="Ribosomal_bL36"/>
    <property type="match status" value="1"/>
</dbReference>
<dbReference type="InterPro" id="IPR000473">
    <property type="entry name" value="Ribosomal_bL36"/>
</dbReference>
<dbReference type="InterPro" id="IPR035977">
    <property type="entry name" value="Ribosomal_bL36_sp"/>
</dbReference>
<dbReference type="NCBIfam" id="TIGR01022">
    <property type="entry name" value="rpmJ_bact"/>
    <property type="match status" value="1"/>
</dbReference>
<dbReference type="PANTHER" id="PTHR42888">
    <property type="entry name" value="50S RIBOSOMAL PROTEIN L36, CHLOROPLASTIC"/>
    <property type="match status" value="1"/>
</dbReference>
<dbReference type="PANTHER" id="PTHR42888:SF1">
    <property type="entry name" value="LARGE RIBOSOMAL SUBUNIT PROTEIN BL36C"/>
    <property type="match status" value="1"/>
</dbReference>
<dbReference type="Pfam" id="PF00444">
    <property type="entry name" value="Ribosomal_L36"/>
    <property type="match status" value="1"/>
</dbReference>
<dbReference type="SUPFAM" id="SSF57840">
    <property type="entry name" value="Ribosomal protein L36"/>
    <property type="match status" value="1"/>
</dbReference>
<dbReference type="PROSITE" id="PS00828">
    <property type="entry name" value="RIBOSOMAL_L36"/>
    <property type="match status" value="1"/>
</dbReference>
<reference key="1">
    <citation type="submission" date="2008-04" db="EMBL/GenBank/DDBJ databases">
        <title>Complete sequence of chromosome 1 of Burkholderia ambifaria MC40-6.</title>
        <authorList>
            <person name="Copeland A."/>
            <person name="Lucas S."/>
            <person name="Lapidus A."/>
            <person name="Glavina del Rio T."/>
            <person name="Dalin E."/>
            <person name="Tice H."/>
            <person name="Pitluck S."/>
            <person name="Chain P."/>
            <person name="Malfatti S."/>
            <person name="Shin M."/>
            <person name="Vergez L."/>
            <person name="Lang D."/>
            <person name="Schmutz J."/>
            <person name="Larimer F."/>
            <person name="Land M."/>
            <person name="Hauser L."/>
            <person name="Kyrpides N."/>
            <person name="Lykidis A."/>
            <person name="Ramette A."/>
            <person name="Konstantinidis K."/>
            <person name="Tiedje J."/>
            <person name="Richardson P."/>
        </authorList>
    </citation>
    <scope>NUCLEOTIDE SEQUENCE [LARGE SCALE GENOMIC DNA]</scope>
    <source>
        <strain>MC40-6</strain>
    </source>
</reference>
<gene>
    <name evidence="1" type="primary">rpmJ</name>
    <name type="ordered locus">BamMC406_0298</name>
</gene>